<organism>
    <name type="scientific">Saccharomyces cerevisiae (strain YJM789)</name>
    <name type="common">Baker's yeast</name>
    <dbReference type="NCBI Taxonomy" id="307796"/>
    <lineage>
        <taxon>Eukaryota</taxon>
        <taxon>Fungi</taxon>
        <taxon>Dikarya</taxon>
        <taxon>Ascomycota</taxon>
        <taxon>Saccharomycotina</taxon>
        <taxon>Saccharomycetes</taxon>
        <taxon>Saccharomycetales</taxon>
        <taxon>Saccharomycetaceae</taxon>
        <taxon>Saccharomyces</taxon>
    </lineage>
</organism>
<evidence type="ECO:0000250" key="1"/>
<evidence type="ECO:0000255" key="2"/>
<evidence type="ECO:0000305" key="3"/>
<gene>
    <name type="primary">NAR1</name>
    <name type="ORF">SCY_4564</name>
</gene>
<comment type="function">
    <text evidence="1">Component of the cytosolic Fe/S protein assembly machinery. Required for maturation of extramitochondrial Fe/S proteins. May play a role in the transfer of pre-assembled Fe/S clusters to target apoproteins (By similarity).</text>
</comment>
<comment type="subunit">
    <text evidence="1">Interacts with CIA1.</text>
</comment>
<comment type="similarity">
    <text evidence="3">Belongs to the NARF family.</text>
</comment>
<sequence>MSALLSESDLNDFISPALACVKPTQVSGGKKDNVNMNGEYEVSTEPDQLEKVSITLSDCLACSGCITSSEEILLSSQSHSVFLKNWGKLSQQQDKFLVVSVSPQCRLSLAQYYGLTLEAADLCLMNFFQKHFQCKYVVGTEMGRIISISKTVEKIIAHKKQKENTGADRKPLLSAVCPGFLIYTEKTKPQLAPMLLNVKSPQQITGSLIRATFESLAIARESFYHLSLMPCFDKKLEASRPESLGDGIDCVITPREIVTMLQELNLDFKSFLTEDTSLYGRLSPPGWDPRVHWASNLGGTCGGYAYQYVTAVQRLHPGSQMIVLEGRNSDIVEYRLLHDDRIIAAASELSGFRNIQNLVRKLTSGSGSERKRNITALRKRRTGPKANSREMAAVAAATADPYHSDYIEVNACPGACMNGGGLLNGEQNSLKRKQLVQTLNKRHGEELAMVDPLTLGPKLEEAAARPLSLEYVFAPVKQAVEKDLVSVGSTW</sequence>
<name>NAR1_YEAS7</name>
<dbReference type="EMBL" id="AAFW02000067">
    <property type="protein sequence ID" value="EDN62585.1"/>
    <property type="molecule type" value="Genomic_DNA"/>
</dbReference>
<dbReference type="SMR" id="A6ZRK3"/>
<dbReference type="HOGENOM" id="CLU_018240_0_1_1"/>
<dbReference type="OrthoDB" id="32447at4893"/>
<dbReference type="Proteomes" id="UP000007060">
    <property type="component" value="Unassembled WGS sequence"/>
</dbReference>
<dbReference type="GO" id="GO:0051539">
    <property type="term" value="F:4 iron, 4 sulfur cluster binding"/>
    <property type="evidence" value="ECO:0007669"/>
    <property type="project" value="UniProtKB-KW"/>
</dbReference>
<dbReference type="GO" id="GO:0051536">
    <property type="term" value="F:iron-sulfur cluster binding"/>
    <property type="evidence" value="ECO:0000250"/>
    <property type="project" value="UniProtKB"/>
</dbReference>
<dbReference type="GO" id="GO:0046872">
    <property type="term" value="F:metal ion binding"/>
    <property type="evidence" value="ECO:0007669"/>
    <property type="project" value="UniProtKB-KW"/>
</dbReference>
<dbReference type="GO" id="GO:0016226">
    <property type="term" value="P:iron-sulfur cluster assembly"/>
    <property type="evidence" value="ECO:0000250"/>
    <property type="project" value="UniProtKB"/>
</dbReference>
<dbReference type="Gene3D" id="3.40.50.1780">
    <property type="match status" value="1"/>
</dbReference>
<dbReference type="Gene3D" id="3.40.950.10">
    <property type="entry name" value="Fe-only Hydrogenase (Larger Subunit), Chain L, domain 3"/>
    <property type="match status" value="1"/>
</dbReference>
<dbReference type="InterPro" id="IPR050340">
    <property type="entry name" value="Cytosolic_Fe-S_CAF"/>
</dbReference>
<dbReference type="InterPro" id="IPR009016">
    <property type="entry name" value="Fe_hydrogenase"/>
</dbReference>
<dbReference type="InterPro" id="IPR004108">
    <property type="entry name" value="Fe_hydrogenase_lsu_C"/>
</dbReference>
<dbReference type="PANTHER" id="PTHR11615">
    <property type="entry name" value="NITRATE, FORMATE, IRON DEHYDROGENASE"/>
    <property type="match status" value="1"/>
</dbReference>
<dbReference type="Pfam" id="PF02906">
    <property type="entry name" value="Fe_hyd_lg_C"/>
    <property type="match status" value="1"/>
</dbReference>
<dbReference type="SUPFAM" id="SSF53920">
    <property type="entry name" value="Fe-only hydrogenase"/>
    <property type="match status" value="1"/>
</dbReference>
<accession>A6ZRK3</accession>
<proteinExistence type="inferred from homology"/>
<protein>
    <recommendedName>
        <fullName>Cytosolic Fe-S cluster assembly factor NAR1</fullName>
    </recommendedName>
    <alternativeName>
        <fullName>Nuclear architecture-related protein 1</fullName>
    </alternativeName>
</protein>
<keyword id="KW-0004">4Fe-4S</keyword>
<keyword id="KW-0408">Iron</keyword>
<keyword id="KW-0411">Iron-sulfur</keyword>
<keyword id="KW-0479">Metal-binding</keyword>
<reference key="1">
    <citation type="journal article" date="2007" name="Proc. Natl. Acad. Sci. U.S.A.">
        <title>Genome sequencing and comparative analysis of Saccharomyces cerevisiae strain YJM789.</title>
        <authorList>
            <person name="Wei W."/>
            <person name="McCusker J.H."/>
            <person name="Hyman R.W."/>
            <person name="Jones T."/>
            <person name="Ning Y."/>
            <person name="Cao Z."/>
            <person name="Gu Z."/>
            <person name="Bruno D."/>
            <person name="Miranda M."/>
            <person name="Nguyen M."/>
            <person name="Wilhelmy J."/>
            <person name="Komp C."/>
            <person name="Tamse R."/>
            <person name="Wang X."/>
            <person name="Jia P."/>
            <person name="Luedi P."/>
            <person name="Oefner P.J."/>
            <person name="David L."/>
            <person name="Dietrich F.S."/>
            <person name="Li Y."/>
            <person name="Davis R.W."/>
            <person name="Steinmetz L.M."/>
        </authorList>
    </citation>
    <scope>NUCLEOTIDE SEQUENCE [LARGE SCALE GENOMIC DNA]</scope>
    <source>
        <strain>YJM789</strain>
    </source>
</reference>
<feature type="chain" id="PRO_0000383743" description="Cytosolic Fe-S cluster assembly factor NAR1">
    <location>
        <begin position="1"/>
        <end position="491"/>
    </location>
</feature>
<feature type="binding site" evidence="2">
    <location>
        <position position="20"/>
    </location>
    <ligand>
        <name>[4Fe-4S] cluster</name>
        <dbReference type="ChEBI" id="CHEBI:49883"/>
        <label>1</label>
    </ligand>
</feature>
<feature type="binding site" evidence="2">
    <location>
        <position position="59"/>
    </location>
    <ligand>
        <name>[4Fe-4S] cluster</name>
        <dbReference type="ChEBI" id="CHEBI:49883"/>
        <label>1</label>
    </ligand>
</feature>
<feature type="binding site" evidence="2">
    <location>
        <position position="62"/>
    </location>
    <ligand>
        <name>[4Fe-4S] cluster</name>
        <dbReference type="ChEBI" id="CHEBI:49883"/>
        <label>1</label>
    </ligand>
</feature>
<feature type="binding site" evidence="2">
    <location>
        <position position="65"/>
    </location>
    <ligand>
        <name>[4Fe-4S] cluster</name>
        <dbReference type="ChEBI" id="CHEBI:49883"/>
        <label>1</label>
    </ligand>
</feature>
<feature type="binding site" evidence="2">
    <location>
        <position position="177"/>
    </location>
    <ligand>
        <name>[4Fe-4S] cluster</name>
        <dbReference type="ChEBI" id="CHEBI:49883"/>
        <label>2</label>
    </ligand>
</feature>
<feature type="binding site" evidence="2">
    <location>
        <position position="231"/>
    </location>
    <ligand>
        <name>[4Fe-4S] cluster</name>
        <dbReference type="ChEBI" id="CHEBI:49883"/>
        <label>2</label>
    </ligand>
</feature>
<feature type="binding site" evidence="2">
    <location>
        <position position="412"/>
    </location>
    <ligand>
        <name>[4Fe-4S] cluster</name>
        <dbReference type="ChEBI" id="CHEBI:49883"/>
        <label>2</label>
    </ligand>
</feature>
<feature type="binding site" evidence="2">
    <location>
        <position position="416"/>
    </location>
    <ligand>
        <name>[4Fe-4S] cluster</name>
        <dbReference type="ChEBI" id="CHEBI:49883"/>
        <label>2</label>
    </ligand>
</feature>